<accession>Q6MS90</accession>
<feature type="chain" id="PRO_0000368613" description="ATP synthase subunit b">
    <location>
        <begin position="1"/>
        <end position="181"/>
    </location>
</feature>
<feature type="transmembrane region" description="Helical" evidence="1">
    <location>
        <begin position="24"/>
        <end position="44"/>
    </location>
</feature>
<name>ATPF_MYCMS</name>
<keyword id="KW-0066">ATP synthesis</keyword>
<keyword id="KW-1003">Cell membrane</keyword>
<keyword id="KW-0138">CF(0)</keyword>
<keyword id="KW-0375">Hydrogen ion transport</keyword>
<keyword id="KW-0406">Ion transport</keyword>
<keyword id="KW-0472">Membrane</keyword>
<keyword id="KW-1185">Reference proteome</keyword>
<keyword id="KW-0812">Transmembrane</keyword>
<keyword id="KW-1133">Transmembrane helix</keyword>
<keyword id="KW-0813">Transport</keyword>
<comment type="function">
    <text evidence="1">F(1)F(0) ATP synthase produces ATP from ADP in the presence of a proton or sodium gradient. F-type ATPases consist of two structural domains, F(1) containing the extramembraneous catalytic core and F(0) containing the membrane proton channel, linked together by a central stalk and a peripheral stalk. During catalysis, ATP synthesis in the catalytic domain of F(1) is coupled via a rotary mechanism of the central stalk subunits to proton translocation.</text>
</comment>
<comment type="function">
    <text evidence="1">Component of the F(0) channel, it forms part of the peripheral stalk, linking F(1) to F(0).</text>
</comment>
<comment type="subunit">
    <text evidence="1">F-type ATPases have 2 components, F(1) - the catalytic core - and F(0) - the membrane proton channel. F(1) has five subunits: alpha(3), beta(3), gamma(1), delta(1), epsilon(1). F(0) has three main subunits: a(1), b(2) and c(10-14). The alpha and beta chains form an alternating ring which encloses part of the gamma chain. F(1) is attached to F(0) by a central stalk formed by the gamma and epsilon chains, while a peripheral stalk is formed by the delta and b chains.</text>
</comment>
<comment type="subcellular location">
    <subcellularLocation>
        <location evidence="1">Cell membrane</location>
        <topology evidence="1">Single-pass membrane protein</topology>
    </subcellularLocation>
</comment>
<comment type="similarity">
    <text evidence="1">Belongs to the ATPase B chain family.</text>
</comment>
<protein>
    <recommendedName>
        <fullName evidence="1">ATP synthase subunit b</fullName>
    </recommendedName>
    <alternativeName>
        <fullName evidence="1">ATP synthase F(0) sector subunit b</fullName>
    </alternativeName>
    <alternativeName>
        <fullName evidence="1">ATPase subunit I</fullName>
    </alternativeName>
    <alternativeName>
        <fullName evidence="1">F-type ATPase subunit b</fullName>
        <shortName evidence="1">F-ATPase subunit b</shortName>
    </alternativeName>
</protein>
<gene>
    <name evidence="1" type="primary">atpF</name>
    <name type="ordered locus">MSC_0889</name>
</gene>
<proteinExistence type="inferred from homology"/>
<evidence type="ECO:0000255" key="1">
    <source>
        <dbReference type="HAMAP-Rule" id="MF_01398"/>
    </source>
</evidence>
<reference key="1">
    <citation type="journal article" date="2004" name="Genome Res.">
        <title>The genome sequence of Mycoplasma mycoides subsp. mycoides SC type strain PG1T, the causative agent of contagious bovine pleuropneumonia (CBPP).</title>
        <authorList>
            <person name="Westberg J."/>
            <person name="Persson A."/>
            <person name="Holmberg A."/>
            <person name="Goesmann A."/>
            <person name="Lundeberg J."/>
            <person name="Johansson K.-E."/>
            <person name="Pettersson B."/>
            <person name="Uhlen M."/>
        </authorList>
    </citation>
    <scope>NUCLEOTIDE SEQUENCE [LARGE SCALE GENOMIC DNA]</scope>
    <source>
        <strain>CCUG 32753 / NCTC 10114 / PG1</strain>
    </source>
</reference>
<sequence length="181" mass="20469">MLFQGFNVVINATTQGVPKIVESLFPNLPNFIAHLLATIILVIVLTKLVYKPYKQMIEKQTQKITEVLSDAIEKQTQANIKIKQANTLLEDAKTESVSILKTARIDAEIQKNKIIDNANLQAKNIQSYAQNSIKQEKIKAQLEIKNTIVNLAINSAEKILNKEIDKNTNKQLIEEFIKELD</sequence>
<organism>
    <name type="scientific">Mycoplasma mycoides subsp. mycoides SC (strain CCUG 32753 / NCTC 10114 / PG1)</name>
    <dbReference type="NCBI Taxonomy" id="272632"/>
    <lineage>
        <taxon>Bacteria</taxon>
        <taxon>Bacillati</taxon>
        <taxon>Mycoplasmatota</taxon>
        <taxon>Mollicutes</taxon>
        <taxon>Mycoplasmataceae</taxon>
        <taxon>Mycoplasma</taxon>
    </lineage>
</organism>
<dbReference type="EMBL" id="BX293980">
    <property type="protein sequence ID" value="CAE77500.1"/>
    <property type="molecule type" value="Genomic_DNA"/>
</dbReference>
<dbReference type="RefSeq" id="NP_975858.1">
    <property type="nucleotide sequence ID" value="NC_005364.2"/>
</dbReference>
<dbReference type="RefSeq" id="WP_011167042.1">
    <property type="nucleotide sequence ID" value="NC_005364.2"/>
</dbReference>
<dbReference type="SMR" id="Q6MS90"/>
<dbReference type="STRING" id="272632.MSC_0889"/>
<dbReference type="KEGG" id="mmy:MSC_0889"/>
<dbReference type="PATRIC" id="fig|272632.4.peg.961"/>
<dbReference type="eggNOG" id="COG0711">
    <property type="taxonomic scope" value="Bacteria"/>
</dbReference>
<dbReference type="HOGENOM" id="CLU_079215_4_3_14"/>
<dbReference type="Proteomes" id="UP000001016">
    <property type="component" value="Chromosome"/>
</dbReference>
<dbReference type="GO" id="GO:0005886">
    <property type="term" value="C:plasma membrane"/>
    <property type="evidence" value="ECO:0007669"/>
    <property type="project" value="UniProtKB-SubCell"/>
</dbReference>
<dbReference type="GO" id="GO:0045259">
    <property type="term" value="C:proton-transporting ATP synthase complex"/>
    <property type="evidence" value="ECO:0007669"/>
    <property type="project" value="UniProtKB-KW"/>
</dbReference>
<dbReference type="GO" id="GO:0046933">
    <property type="term" value="F:proton-transporting ATP synthase activity, rotational mechanism"/>
    <property type="evidence" value="ECO:0007669"/>
    <property type="project" value="UniProtKB-UniRule"/>
</dbReference>
<dbReference type="GO" id="GO:0046961">
    <property type="term" value="F:proton-transporting ATPase activity, rotational mechanism"/>
    <property type="evidence" value="ECO:0007669"/>
    <property type="project" value="TreeGrafter"/>
</dbReference>
<dbReference type="CDD" id="cd06503">
    <property type="entry name" value="ATP-synt_Fo_b"/>
    <property type="match status" value="1"/>
</dbReference>
<dbReference type="HAMAP" id="MF_01398">
    <property type="entry name" value="ATP_synth_b_bprime"/>
    <property type="match status" value="1"/>
</dbReference>
<dbReference type="InterPro" id="IPR028987">
    <property type="entry name" value="ATP_synth_B-like_membr_sf"/>
</dbReference>
<dbReference type="InterPro" id="IPR002146">
    <property type="entry name" value="ATP_synth_b/b'su_bac/chlpt"/>
</dbReference>
<dbReference type="InterPro" id="IPR005864">
    <property type="entry name" value="ATP_synth_F0_bsu_bac"/>
</dbReference>
<dbReference type="InterPro" id="IPR050059">
    <property type="entry name" value="ATP_synthase_B_chain"/>
</dbReference>
<dbReference type="NCBIfam" id="TIGR01144">
    <property type="entry name" value="ATP_synt_b"/>
    <property type="match status" value="1"/>
</dbReference>
<dbReference type="PANTHER" id="PTHR33445:SF1">
    <property type="entry name" value="ATP SYNTHASE SUBUNIT B"/>
    <property type="match status" value="1"/>
</dbReference>
<dbReference type="PANTHER" id="PTHR33445">
    <property type="entry name" value="ATP SYNTHASE SUBUNIT B', CHLOROPLASTIC"/>
    <property type="match status" value="1"/>
</dbReference>
<dbReference type="Pfam" id="PF00430">
    <property type="entry name" value="ATP-synt_B"/>
    <property type="match status" value="1"/>
</dbReference>
<dbReference type="SUPFAM" id="SSF81573">
    <property type="entry name" value="F1F0 ATP synthase subunit B, membrane domain"/>
    <property type="match status" value="1"/>
</dbReference>